<protein>
    <recommendedName>
        <fullName>Putative uncharacterized protein YPL276W</fullName>
    </recommendedName>
</protein>
<feature type="chain" id="PRO_0000393443" description="Putative uncharacterized protein YPL276W">
    <location>
        <begin position="1"/>
        <end position="145"/>
    </location>
</feature>
<feature type="binding site" evidence="1">
    <location>
        <position position="97"/>
    </location>
    <ligand>
        <name>substrate</name>
    </ligand>
</feature>
<feature type="binding site" evidence="1">
    <location>
        <position position="121"/>
    </location>
    <ligand>
        <name>substrate</name>
    </ligand>
</feature>
<evidence type="ECO:0000250" key="1">
    <source>
        <dbReference type="UniProtKB" id="P33160"/>
    </source>
</evidence>
<evidence type="ECO:0000305" key="2"/>
<evidence type="ECO:0000305" key="3">
    <source>
    </source>
</evidence>
<evidence type="ECO:0000305" key="4">
    <source>
    </source>
</evidence>
<evidence type="ECO:0000312" key="5">
    <source>
        <dbReference type="SGD" id="S000006197"/>
    </source>
</evidence>
<proteinExistence type="uncertain"/>
<accession>P0CF36</accession>
<accession>Q08987</accession>
<accession>Q08988</accession>
<organism>
    <name type="scientific">Saccharomyces cerevisiae (strain ATCC 204508 / S288c)</name>
    <name type="common">Baker's yeast</name>
    <dbReference type="NCBI Taxonomy" id="559292"/>
    <lineage>
        <taxon>Eukaryota</taxon>
        <taxon>Fungi</taxon>
        <taxon>Dikarya</taxon>
        <taxon>Ascomycota</taxon>
        <taxon>Saccharomycotina</taxon>
        <taxon>Saccharomycetes</taxon>
        <taxon>Saccharomycetales</taxon>
        <taxon>Saccharomycetaceae</taxon>
        <taxon>Saccharomyces</taxon>
    </lineage>
</organism>
<sequence length="145" mass="15936">MSKGKVLLVLYEGGKHAEEQEKLLGCIENELGIRNFIEEQGYELVTTIDKDPEPTSTVDRELKDAEIVITTPFFPAYISRNRIAEAPNLKLCVTAGVGSDHVDLEAANERKITVTEVTGSNVVSVAEHVMATILVLIRNYNGGHQ</sequence>
<reference key="1">
    <citation type="journal article" date="1997" name="Nature">
        <title>The nucleotide sequence of Saccharomyces cerevisiae chromosome XVI.</title>
        <authorList>
            <person name="Bussey H."/>
            <person name="Storms R.K."/>
            <person name="Ahmed A."/>
            <person name="Albermann K."/>
            <person name="Allen E."/>
            <person name="Ansorge W."/>
            <person name="Araujo R."/>
            <person name="Aparicio A."/>
            <person name="Barrell B.G."/>
            <person name="Badcock K."/>
            <person name="Benes V."/>
            <person name="Botstein D."/>
            <person name="Bowman S."/>
            <person name="Brueckner M."/>
            <person name="Carpenter J."/>
            <person name="Cherry J.M."/>
            <person name="Chung E."/>
            <person name="Churcher C.M."/>
            <person name="Coster F."/>
            <person name="Davis K."/>
            <person name="Davis R.W."/>
            <person name="Dietrich F.S."/>
            <person name="Delius H."/>
            <person name="DiPaolo T."/>
            <person name="Dubois E."/>
            <person name="Duesterhoeft A."/>
            <person name="Duncan M."/>
            <person name="Floeth M."/>
            <person name="Fortin N."/>
            <person name="Friesen J.D."/>
            <person name="Fritz C."/>
            <person name="Goffeau A."/>
            <person name="Hall J."/>
            <person name="Hebling U."/>
            <person name="Heumann K."/>
            <person name="Hilbert H."/>
            <person name="Hillier L.W."/>
            <person name="Hunicke-Smith S."/>
            <person name="Hyman R.W."/>
            <person name="Johnston M."/>
            <person name="Kalman S."/>
            <person name="Kleine K."/>
            <person name="Komp C."/>
            <person name="Kurdi O."/>
            <person name="Lashkari D."/>
            <person name="Lew H."/>
            <person name="Lin A."/>
            <person name="Lin D."/>
            <person name="Louis E.J."/>
            <person name="Marathe R."/>
            <person name="Messenguy F."/>
            <person name="Mewes H.-W."/>
            <person name="Mirtipati S."/>
            <person name="Moestl D."/>
            <person name="Mueller-Auer S."/>
            <person name="Namath A."/>
            <person name="Nentwich U."/>
            <person name="Oefner P."/>
            <person name="Pearson D."/>
            <person name="Petel F.X."/>
            <person name="Pohl T.M."/>
            <person name="Purnelle B."/>
            <person name="Rajandream M.A."/>
            <person name="Rechmann S."/>
            <person name="Rieger M."/>
            <person name="Riles L."/>
            <person name="Roberts D."/>
            <person name="Schaefer M."/>
            <person name="Scharfe M."/>
            <person name="Scherens B."/>
            <person name="Schramm S."/>
            <person name="Schroeder M."/>
            <person name="Sdicu A.-M."/>
            <person name="Tettelin H."/>
            <person name="Urrestarazu L.A."/>
            <person name="Ushinsky S."/>
            <person name="Vierendeels F."/>
            <person name="Vissers S."/>
            <person name="Voss H."/>
            <person name="Walsh S.V."/>
            <person name="Wambutt R."/>
            <person name="Wang Y."/>
            <person name="Wedler E."/>
            <person name="Wedler H."/>
            <person name="Winnett E."/>
            <person name="Zhong W.-W."/>
            <person name="Zollner A."/>
            <person name="Vo D.H."/>
            <person name="Hani J."/>
        </authorList>
    </citation>
    <scope>NUCLEOTIDE SEQUENCE [LARGE SCALE GENOMIC DNA]</scope>
    <source>
        <strain>ATCC 204508 / S288c</strain>
    </source>
</reference>
<reference key="2">
    <citation type="journal article" date="2014" name="G3 (Bethesda)">
        <title>The reference genome sequence of Saccharomyces cerevisiae: Then and now.</title>
        <authorList>
            <person name="Engel S.R."/>
            <person name="Dietrich F.S."/>
            <person name="Fisk D.G."/>
            <person name="Binkley G."/>
            <person name="Balakrishnan R."/>
            <person name="Costanzo M.C."/>
            <person name="Dwight S.S."/>
            <person name="Hitz B.C."/>
            <person name="Karra K."/>
            <person name="Nash R.S."/>
            <person name="Weng S."/>
            <person name="Wong E.D."/>
            <person name="Lloyd P."/>
            <person name="Skrzypek M.S."/>
            <person name="Miyasato S.R."/>
            <person name="Simison M."/>
            <person name="Cherry J.M."/>
        </authorList>
    </citation>
    <scope>GENOME REANNOTATION</scope>
    <source>
        <strain>ATCC 204508 / S288c</strain>
    </source>
</reference>
<reference key="3">
    <citation type="journal article" date="2007" name="Genome Res.">
        <title>Approaching a complete repository of sequence-verified protein-encoding clones for Saccharomyces cerevisiae.</title>
        <authorList>
            <person name="Hu Y."/>
            <person name="Rolfs A."/>
            <person name="Bhullar B."/>
            <person name="Murthy T.V.S."/>
            <person name="Zhu C."/>
            <person name="Berger M.F."/>
            <person name="Camargo A.A."/>
            <person name="Kelley F."/>
            <person name="McCarron S."/>
            <person name="Jepson D."/>
            <person name="Richardson A."/>
            <person name="Raphael J."/>
            <person name="Moreira D."/>
            <person name="Taycher E."/>
            <person name="Zuo D."/>
            <person name="Mohr S."/>
            <person name="Kane M.F."/>
            <person name="Williamson J."/>
            <person name="Simpson A.J.G."/>
            <person name="Bulyk M.L."/>
            <person name="Harlow E."/>
            <person name="Marsischky G."/>
            <person name="Kolodner R.D."/>
            <person name="LaBaer J."/>
        </authorList>
    </citation>
    <scope>NUCLEOTIDE SEQUENCE [GENOMIC DNA]</scope>
    <source>
        <strain>ATCC 204508 / S288c</strain>
    </source>
</reference>
<reference key="4">
    <citation type="journal article" date="2002" name="Yeast">
        <title>Functional analysis of structural genes for NAD(+)-dependent formate dehydrogenase in Saccharomyces cerevisiae.</title>
        <authorList>
            <person name="Overkamp K.M."/>
            <person name="Koetter P."/>
            <person name="van der Hoek R."/>
            <person name="Schoondermark-Stolk S."/>
            <person name="Luttik M.A.H."/>
            <person name="van Dijken J.P."/>
            <person name="Pronk J.T."/>
        </authorList>
    </citation>
    <scope>NUCLEOTIDE SEQUENCE [GENOMIC DNA] OF 93-145</scope>
    <scope>CONFIRMATION OF STOP CODON</scope>
    <source>
        <strain>ATCC 200060 / W303</strain>
        <strain>ATCC 201388 / BY4741</strain>
    </source>
</reference>
<dbReference type="EMBL" id="Z73632">
    <property type="protein sequence ID" value="CAA98012.1"/>
    <property type="molecule type" value="Genomic_DNA"/>
</dbReference>
<dbReference type="EMBL" id="AY558055">
    <property type="protein sequence ID" value="AAS56381.1"/>
    <property type="molecule type" value="Genomic_DNA"/>
</dbReference>
<dbReference type="PIR" id="S65309">
    <property type="entry name" value="S65309"/>
</dbReference>
<dbReference type="SMR" id="P0CF36"/>
<dbReference type="AGR" id="SGD:S000006197"/>
<dbReference type="SGD" id="S000006197">
    <property type="gene designation" value="YPL276W"/>
</dbReference>
<dbReference type="GO" id="GO:0051287">
    <property type="term" value="F:NAD binding"/>
    <property type="evidence" value="ECO:0007669"/>
    <property type="project" value="InterPro"/>
</dbReference>
<dbReference type="GO" id="GO:0016616">
    <property type="term" value="F:oxidoreductase activity, acting on the CH-OH group of donors, NAD or NADP as acceptor"/>
    <property type="evidence" value="ECO:0007669"/>
    <property type="project" value="InterPro"/>
</dbReference>
<dbReference type="FunFam" id="3.40.50.720:FF:000061">
    <property type="entry name" value="Formate dehydrogenase"/>
    <property type="match status" value="1"/>
</dbReference>
<dbReference type="Gene3D" id="3.40.50.720">
    <property type="entry name" value="NAD(P)-binding Rossmann-like Domain"/>
    <property type="match status" value="2"/>
</dbReference>
<dbReference type="InterPro" id="IPR006139">
    <property type="entry name" value="D-isomer_2_OHA_DH_cat_dom"/>
</dbReference>
<dbReference type="PANTHER" id="PTHR42938">
    <property type="entry name" value="FORMATE DEHYDROGENASE 1"/>
    <property type="match status" value="1"/>
</dbReference>
<dbReference type="PANTHER" id="PTHR42938:SF9">
    <property type="entry name" value="FORMATE DEHYDROGENASE 1"/>
    <property type="match status" value="1"/>
</dbReference>
<dbReference type="Pfam" id="PF00389">
    <property type="entry name" value="2-Hacid_dh"/>
    <property type="match status" value="1"/>
</dbReference>
<dbReference type="SUPFAM" id="SSF52283">
    <property type="entry name" value="Formate/glycerate dehydrogenase catalytic domain-like"/>
    <property type="match status" value="1"/>
</dbReference>
<name>YP276_YEAST</name>
<comment type="similarity">
    <text evidence="2">Belongs to the D-isomer specific 2-hydroxyacid dehydrogenase family. FDH subfamily.</text>
</comment>
<comment type="caution">
    <text evidence="3 4">Could be the product of a pseudogene unlikely to encode a functional protein. This is a truncated version of a second copy of formate dehydrogenase in the yeast genome. Strains BY4741, S288c and W303 have a stop codon in position 146, which disrupts the gene coding for this protein and produces two ORFs YPL275W and YPL276W. Because of that it is not part of the S.cerevisiae S288c complete/reference proteome set. A contiguous sequence for formate dehydrogenase 2 can be found in found in strain CEN.PK113-7D (AC P0CT22).</text>
</comment>
<gene>
    <name evidence="5" type="ordered locus">YPL276W</name>
    <name type="ORF">P0323</name>
</gene>